<feature type="chain" id="PRO_1000064642" description="Macrodomain Ter protein">
    <location>
        <begin position="1"/>
        <end position="151"/>
    </location>
</feature>
<protein>
    <recommendedName>
        <fullName evidence="1">Macrodomain Ter protein</fullName>
    </recommendedName>
</protein>
<keyword id="KW-0131">Cell cycle</keyword>
<keyword id="KW-0132">Cell division</keyword>
<keyword id="KW-0963">Cytoplasm</keyword>
<keyword id="KW-0238">DNA-binding</keyword>
<comment type="function">
    <text evidence="1">Required for spatial organization of the terminus region of the chromosome (Ter macrodomain) during the cell cycle. Prevents early segregation of duplicated Ter macrodomains during cell division. Binds specifically to matS, which is a 13 bp signature motif repeated within the Ter macrodomain.</text>
</comment>
<comment type="subunit">
    <text evidence="1">Homodimer.</text>
</comment>
<comment type="subcellular location">
    <subcellularLocation>
        <location evidence="1">Cytoplasm</location>
    </subcellularLocation>
</comment>
<comment type="similarity">
    <text evidence="1">Belongs to the MatP family.</text>
</comment>
<reference key="1">
    <citation type="journal article" date="2004" name="Proc. Natl. Acad. Sci. U.S.A.">
        <title>Insights into the evolution of Yersinia pestis through whole-genome comparison with Yersinia pseudotuberculosis.</title>
        <authorList>
            <person name="Chain P.S.G."/>
            <person name="Carniel E."/>
            <person name="Larimer F.W."/>
            <person name="Lamerdin J."/>
            <person name="Stoutland P.O."/>
            <person name="Regala W.M."/>
            <person name="Georgescu A.M."/>
            <person name="Vergez L.M."/>
            <person name="Land M.L."/>
            <person name="Motin V.L."/>
            <person name="Brubaker R.R."/>
            <person name="Fowler J."/>
            <person name="Hinnebusch J."/>
            <person name="Marceau M."/>
            <person name="Medigue C."/>
            <person name="Simonet M."/>
            <person name="Chenal-Francisque V."/>
            <person name="Souza B."/>
            <person name="Dacheux D."/>
            <person name="Elliott J.M."/>
            <person name="Derbise A."/>
            <person name="Hauser L.J."/>
            <person name="Garcia E."/>
        </authorList>
    </citation>
    <scope>NUCLEOTIDE SEQUENCE [LARGE SCALE GENOMIC DNA]</scope>
    <source>
        <strain>IP32953</strain>
    </source>
</reference>
<proteinExistence type="inferred from homology"/>
<accession>Q66CF1</accession>
<organism>
    <name type="scientific">Yersinia pseudotuberculosis serotype I (strain IP32953)</name>
    <dbReference type="NCBI Taxonomy" id="273123"/>
    <lineage>
        <taxon>Bacteria</taxon>
        <taxon>Pseudomonadati</taxon>
        <taxon>Pseudomonadota</taxon>
        <taxon>Gammaproteobacteria</taxon>
        <taxon>Enterobacterales</taxon>
        <taxon>Yersiniaceae</taxon>
        <taxon>Yersinia</taxon>
    </lineage>
</organism>
<gene>
    <name evidence="1" type="primary">matP</name>
    <name type="ordered locus">YPTB1452</name>
</gene>
<sequence length="151" mass="17934">MKYQQLENLESGWKWAYLVKKHREGEAITRHIENSAAQDAVEQLMKLENEPVKVQEWIDAHMNVNLATRMKQTIRARRKRHFNAEHQHTRKKSIDLEFLVWQRLAVLARRRGNTLSDTVVQLIEDAERKEKYASQMSSLKQDLKDILDKEV</sequence>
<name>MATP_YERPS</name>
<evidence type="ECO:0000255" key="1">
    <source>
        <dbReference type="HAMAP-Rule" id="MF_01073"/>
    </source>
</evidence>
<dbReference type="EMBL" id="BX936398">
    <property type="protein sequence ID" value="CAH20692.1"/>
    <property type="molecule type" value="Genomic_DNA"/>
</dbReference>
<dbReference type="RefSeq" id="WP_002226586.1">
    <property type="nucleotide sequence ID" value="NZ_CP009712.1"/>
</dbReference>
<dbReference type="SMR" id="Q66CF1"/>
<dbReference type="GeneID" id="57977130"/>
<dbReference type="KEGG" id="ypo:BZ17_1066"/>
<dbReference type="KEGG" id="yps:YPTB1452"/>
<dbReference type="PATRIC" id="fig|273123.14.peg.1131"/>
<dbReference type="Proteomes" id="UP000001011">
    <property type="component" value="Chromosome"/>
</dbReference>
<dbReference type="GO" id="GO:0005737">
    <property type="term" value="C:cytoplasm"/>
    <property type="evidence" value="ECO:0007669"/>
    <property type="project" value="UniProtKB-SubCell"/>
</dbReference>
<dbReference type="GO" id="GO:0043565">
    <property type="term" value="F:sequence-specific DNA binding"/>
    <property type="evidence" value="ECO:0007669"/>
    <property type="project" value="UniProtKB-UniRule"/>
</dbReference>
<dbReference type="GO" id="GO:0051301">
    <property type="term" value="P:cell division"/>
    <property type="evidence" value="ECO:0007669"/>
    <property type="project" value="UniProtKB-UniRule"/>
</dbReference>
<dbReference type="GO" id="GO:0006355">
    <property type="term" value="P:regulation of DNA-templated transcription"/>
    <property type="evidence" value="ECO:0007669"/>
    <property type="project" value="InterPro"/>
</dbReference>
<dbReference type="Gene3D" id="1.20.1270.380">
    <property type="entry name" value="MatP, N-terminal domain"/>
    <property type="match status" value="1"/>
</dbReference>
<dbReference type="Gene3D" id="1.10.1220.10">
    <property type="entry name" value="Met repressor-like"/>
    <property type="match status" value="1"/>
</dbReference>
<dbReference type="HAMAP" id="MF_01073">
    <property type="entry name" value="MatP"/>
    <property type="match status" value="1"/>
</dbReference>
<dbReference type="InterPro" id="IPR013321">
    <property type="entry name" value="Arc_rbn_hlx_hlx"/>
</dbReference>
<dbReference type="InterPro" id="IPR009390">
    <property type="entry name" value="MatP"/>
</dbReference>
<dbReference type="InterPro" id="IPR035375">
    <property type="entry name" value="MatP_C"/>
</dbReference>
<dbReference type="InterPro" id="IPR035087">
    <property type="entry name" value="MatP_N"/>
</dbReference>
<dbReference type="InterPro" id="IPR038339">
    <property type="entry name" value="MatP_N_sf"/>
</dbReference>
<dbReference type="NCBIfam" id="NF003471">
    <property type="entry name" value="PRK05097.1"/>
    <property type="match status" value="1"/>
</dbReference>
<dbReference type="Pfam" id="PF06303">
    <property type="entry name" value="MatP"/>
    <property type="match status" value="1"/>
</dbReference>
<dbReference type="Pfam" id="PF17414">
    <property type="entry name" value="MatP_C"/>
    <property type="match status" value="1"/>
</dbReference>